<protein>
    <recommendedName>
        <fullName>Agouti-signaling protein</fullName>
        <shortName>ASP</shortName>
    </recommendedName>
    <alternativeName>
        <fullName>Agouti switch protein</fullName>
    </alternativeName>
</protein>
<name>ASIP_MACHE</name>
<dbReference type="EMBL" id="AB299213">
    <property type="protein sequence ID" value="BAF80797.1"/>
    <property type="molecule type" value="Genomic_DNA"/>
</dbReference>
<dbReference type="EMBL" id="AB299214">
    <property type="protein sequence ID" value="BAF80798.1"/>
    <property type="molecule type" value="Genomic_DNA"/>
</dbReference>
<dbReference type="GlyCosmos" id="A8CEM5">
    <property type="glycosylation" value="1 site, No reported glycans"/>
</dbReference>
<dbReference type="GO" id="GO:0005615">
    <property type="term" value="C:extracellular space"/>
    <property type="evidence" value="ECO:0000250"/>
    <property type="project" value="UniProtKB"/>
</dbReference>
<dbReference type="GO" id="GO:0031779">
    <property type="term" value="F:melanocortin receptor binding"/>
    <property type="evidence" value="ECO:0007669"/>
    <property type="project" value="TreeGrafter"/>
</dbReference>
<dbReference type="GO" id="GO:0005184">
    <property type="term" value="F:neuropeptide hormone activity"/>
    <property type="evidence" value="ECO:0007669"/>
    <property type="project" value="TreeGrafter"/>
</dbReference>
<dbReference type="GO" id="GO:0009755">
    <property type="term" value="P:hormone-mediated signaling pathway"/>
    <property type="evidence" value="ECO:0007669"/>
    <property type="project" value="InterPro"/>
</dbReference>
<dbReference type="GO" id="GO:0042438">
    <property type="term" value="P:melanin biosynthetic process"/>
    <property type="evidence" value="ECO:0000250"/>
    <property type="project" value="UniProtKB"/>
</dbReference>
<dbReference type="GO" id="GO:0032438">
    <property type="term" value="P:melanosome organization"/>
    <property type="evidence" value="ECO:0007669"/>
    <property type="project" value="TreeGrafter"/>
</dbReference>
<dbReference type="FunFam" id="4.10.760.10:FF:000002">
    <property type="entry name" value="Agouti-signaling protein"/>
    <property type="match status" value="1"/>
</dbReference>
<dbReference type="Gene3D" id="4.10.760.10">
    <property type="entry name" value="Agouti domain"/>
    <property type="match status" value="1"/>
</dbReference>
<dbReference type="InterPro" id="IPR007733">
    <property type="entry name" value="Agouti"/>
</dbReference>
<dbReference type="InterPro" id="IPR027300">
    <property type="entry name" value="Agouti_dom"/>
</dbReference>
<dbReference type="InterPro" id="IPR036836">
    <property type="entry name" value="Agouti_dom_sf"/>
</dbReference>
<dbReference type="PANTHER" id="PTHR16551">
    <property type="entry name" value="AGOUTI RELATED"/>
    <property type="match status" value="1"/>
</dbReference>
<dbReference type="PANTHER" id="PTHR16551:SF1">
    <property type="entry name" value="AGOUTI-SIGNALING PROTEIN"/>
    <property type="match status" value="1"/>
</dbReference>
<dbReference type="Pfam" id="PF05039">
    <property type="entry name" value="Agouti"/>
    <property type="match status" value="1"/>
</dbReference>
<dbReference type="SMART" id="SM00792">
    <property type="entry name" value="Agouti"/>
    <property type="match status" value="1"/>
</dbReference>
<dbReference type="SUPFAM" id="SSF57055">
    <property type="entry name" value="Agouti-related protein"/>
    <property type="match status" value="1"/>
</dbReference>
<dbReference type="PROSITE" id="PS60024">
    <property type="entry name" value="AGOUTI_1"/>
    <property type="match status" value="1"/>
</dbReference>
<dbReference type="PROSITE" id="PS51150">
    <property type="entry name" value="AGOUTI_2"/>
    <property type="match status" value="1"/>
</dbReference>
<comment type="function">
    <text evidence="3">Involved in the regulation of melanogenesis. The binding of ASP to MC1R precludes alpha-MSH initiated signaling and thus blocks production of cAMP, leading to a down-regulation of eumelanogenesis (brown/black pigment) and thus increasing synthesis of pheomelanin (yellow/red pigment) (By similarity).</text>
</comment>
<comment type="subcellular location">
    <subcellularLocation>
        <location evidence="2">Secreted</location>
    </subcellularLocation>
</comment>
<comment type="domain">
    <text evidence="1">The presence of a 'disulfide through disulfide knot' structurally defines this protein as a knottin.</text>
</comment>
<accession>A8CEM5</accession>
<accession>A8CEM6</accession>
<reference key="1">
    <citation type="submission" date="2007-03" db="EMBL/GenBank/DDBJ databases">
        <title>Association of the agouti signaling protein gene with coat color variation in the macaques.</title>
        <authorList>
            <person name="Nakayama K."/>
            <person name="Shotake T."/>
            <person name="Takenaka O."/>
            <person name="Ishida T."/>
        </authorList>
    </citation>
    <scope>NUCLEOTIDE SEQUENCE [GENOMIC DNA]</scope>
    <source>
        <strain>Macaca hecki A</strain>
    </source>
</reference>
<gene>
    <name type="primary">ASIP</name>
</gene>
<keyword id="KW-1015">Disulfide bond</keyword>
<keyword id="KW-0325">Glycoprotein</keyword>
<keyword id="KW-0960">Knottin</keyword>
<keyword id="KW-0964">Secreted</keyword>
<keyword id="KW-0732">Signal</keyword>
<evidence type="ECO:0000250" key="1"/>
<evidence type="ECO:0000250" key="2">
    <source>
        <dbReference type="UniProtKB" id="P42127"/>
    </source>
</evidence>
<evidence type="ECO:0000250" key="3">
    <source>
        <dbReference type="UniProtKB" id="Q03288"/>
    </source>
</evidence>
<evidence type="ECO:0000255" key="4"/>
<evidence type="ECO:0000255" key="5">
    <source>
        <dbReference type="PROSITE-ProRule" id="PRU00494"/>
    </source>
</evidence>
<evidence type="ECO:0000256" key="6">
    <source>
        <dbReference type="SAM" id="MobiDB-lite"/>
    </source>
</evidence>
<sequence length="132" mass="14703">MDVTRLLLATLLVFLCFFTAYSHPPPEEKLRDDRSLRSNSSVNLLDFPSVSIVALNKNSKQISRKEAEKKRSSKKEASMKKVARPRTPLSAPCVATRDSCKPPAPACCDPCAFCQCRFFRSACSCRVLSLNC</sequence>
<proteinExistence type="inferred from homology"/>
<organism>
    <name type="scientific">Macaca hecki</name>
    <name type="common">Heck's macaque</name>
    <dbReference type="NCBI Taxonomy" id="90382"/>
    <lineage>
        <taxon>Eukaryota</taxon>
        <taxon>Metazoa</taxon>
        <taxon>Chordata</taxon>
        <taxon>Craniata</taxon>
        <taxon>Vertebrata</taxon>
        <taxon>Euteleostomi</taxon>
        <taxon>Mammalia</taxon>
        <taxon>Eutheria</taxon>
        <taxon>Euarchontoglires</taxon>
        <taxon>Primates</taxon>
        <taxon>Haplorrhini</taxon>
        <taxon>Catarrhini</taxon>
        <taxon>Cercopithecidae</taxon>
        <taxon>Cercopithecinae</taxon>
        <taxon>Macaca</taxon>
    </lineage>
</organism>
<feature type="signal peptide" evidence="4">
    <location>
        <begin position="1"/>
        <end position="22"/>
    </location>
</feature>
<feature type="chain" id="PRO_0000323394" description="Agouti-signaling protein">
    <location>
        <begin position="23"/>
        <end position="132"/>
    </location>
</feature>
<feature type="domain" description="Agouti" evidence="5">
    <location>
        <begin position="93"/>
        <end position="132"/>
    </location>
</feature>
<feature type="region of interest" description="Disordered" evidence="6">
    <location>
        <begin position="61"/>
        <end position="87"/>
    </location>
</feature>
<feature type="compositionally biased region" description="Basic and acidic residues" evidence="6">
    <location>
        <begin position="63"/>
        <end position="79"/>
    </location>
</feature>
<feature type="glycosylation site" description="N-linked (GlcNAc...) asparagine" evidence="4">
    <location>
        <position position="39"/>
    </location>
</feature>
<feature type="disulfide bond" evidence="5">
    <location>
        <begin position="93"/>
        <end position="108"/>
    </location>
</feature>
<feature type="disulfide bond" evidence="5">
    <location>
        <begin position="100"/>
        <end position="114"/>
    </location>
</feature>
<feature type="disulfide bond" evidence="5">
    <location>
        <begin position="107"/>
        <end position="125"/>
    </location>
</feature>
<feature type="disulfide bond" evidence="5">
    <location>
        <begin position="111"/>
        <end position="132"/>
    </location>
</feature>
<feature type="disulfide bond" evidence="5">
    <location>
        <begin position="116"/>
        <end position="123"/>
    </location>
</feature>
<feature type="sequence variant">
    <original>Y</original>
    <variation>C</variation>
    <location>
        <position position="21"/>
    </location>
</feature>